<feature type="chain" id="PRO_1000095934" description="N-(5'-phosphoribosyl)anthranilate isomerase">
    <location>
        <begin position="1"/>
        <end position="222"/>
    </location>
</feature>
<protein>
    <recommendedName>
        <fullName evidence="1">N-(5'-phosphoribosyl)anthranilate isomerase</fullName>
        <shortName evidence="1">PRAI</shortName>
        <ecNumber evidence="1">5.3.1.24</ecNumber>
    </recommendedName>
</protein>
<gene>
    <name evidence="1" type="primary">trpF</name>
    <name type="ordered locus">RHECIAT_CH0000021</name>
</gene>
<organism>
    <name type="scientific">Rhizobium etli (strain CIAT 652)</name>
    <dbReference type="NCBI Taxonomy" id="491916"/>
    <lineage>
        <taxon>Bacteria</taxon>
        <taxon>Pseudomonadati</taxon>
        <taxon>Pseudomonadota</taxon>
        <taxon>Alphaproteobacteria</taxon>
        <taxon>Hyphomicrobiales</taxon>
        <taxon>Rhizobiaceae</taxon>
        <taxon>Rhizobium/Agrobacterium group</taxon>
        <taxon>Rhizobium</taxon>
    </lineage>
</organism>
<proteinExistence type="inferred from homology"/>
<name>TRPF_RHIE6</name>
<sequence>MKPDIKICGLKTPEAIDRALKRGATHIGFIFFEKSPRYIEPDLAAKLAEPARGKAKIVAVVVDPTNDELDEIVSLLKPDILQLHGNESPEHVLTIKALYGLPVMKVFSVRTAADLKRVEAYIGIADRFLFDAKAPKGSELPGGNGISFDWSLLSWLDGSIDYMLSGGLNKDNVANALANTTARGIDVSSGVESAPGVKSVAMIDEFFDAVEGADAPVMASGS</sequence>
<evidence type="ECO:0000255" key="1">
    <source>
        <dbReference type="HAMAP-Rule" id="MF_00135"/>
    </source>
</evidence>
<accession>B3PVV1</accession>
<keyword id="KW-0028">Amino-acid biosynthesis</keyword>
<keyword id="KW-0057">Aromatic amino acid biosynthesis</keyword>
<keyword id="KW-0413">Isomerase</keyword>
<keyword id="KW-0822">Tryptophan biosynthesis</keyword>
<dbReference type="EC" id="5.3.1.24" evidence="1"/>
<dbReference type="EMBL" id="CP001074">
    <property type="protein sequence ID" value="ACE89024.1"/>
    <property type="molecule type" value="Genomic_DNA"/>
</dbReference>
<dbReference type="SMR" id="B3PVV1"/>
<dbReference type="KEGG" id="rec:RHECIAT_CH0000021"/>
<dbReference type="eggNOG" id="COG0135">
    <property type="taxonomic scope" value="Bacteria"/>
</dbReference>
<dbReference type="HOGENOM" id="CLU_076364_1_1_5"/>
<dbReference type="UniPathway" id="UPA00035">
    <property type="reaction ID" value="UER00042"/>
</dbReference>
<dbReference type="Proteomes" id="UP000008817">
    <property type="component" value="Chromosome"/>
</dbReference>
<dbReference type="GO" id="GO:0004640">
    <property type="term" value="F:phosphoribosylanthranilate isomerase activity"/>
    <property type="evidence" value="ECO:0007669"/>
    <property type="project" value="UniProtKB-UniRule"/>
</dbReference>
<dbReference type="GO" id="GO:0000162">
    <property type="term" value="P:L-tryptophan biosynthetic process"/>
    <property type="evidence" value="ECO:0007669"/>
    <property type="project" value="UniProtKB-UniRule"/>
</dbReference>
<dbReference type="CDD" id="cd00405">
    <property type="entry name" value="PRAI"/>
    <property type="match status" value="1"/>
</dbReference>
<dbReference type="Gene3D" id="3.20.20.70">
    <property type="entry name" value="Aldolase class I"/>
    <property type="match status" value="1"/>
</dbReference>
<dbReference type="HAMAP" id="MF_00135">
    <property type="entry name" value="PRAI"/>
    <property type="match status" value="1"/>
</dbReference>
<dbReference type="InterPro" id="IPR013785">
    <property type="entry name" value="Aldolase_TIM"/>
</dbReference>
<dbReference type="InterPro" id="IPR001240">
    <property type="entry name" value="PRAI_dom"/>
</dbReference>
<dbReference type="InterPro" id="IPR011060">
    <property type="entry name" value="RibuloseP-bd_barrel"/>
</dbReference>
<dbReference type="InterPro" id="IPR044643">
    <property type="entry name" value="TrpF_fam"/>
</dbReference>
<dbReference type="NCBIfam" id="NF002295">
    <property type="entry name" value="PRK01222.1-1"/>
    <property type="match status" value="1"/>
</dbReference>
<dbReference type="PANTHER" id="PTHR42894">
    <property type="entry name" value="N-(5'-PHOSPHORIBOSYL)ANTHRANILATE ISOMERASE"/>
    <property type="match status" value="1"/>
</dbReference>
<dbReference type="PANTHER" id="PTHR42894:SF1">
    <property type="entry name" value="N-(5'-PHOSPHORIBOSYL)ANTHRANILATE ISOMERASE"/>
    <property type="match status" value="1"/>
</dbReference>
<dbReference type="Pfam" id="PF00697">
    <property type="entry name" value="PRAI"/>
    <property type="match status" value="1"/>
</dbReference>
<dbReference type="SUPFAM" id="SSF51366">
    <property type="entry name" value="Ribulose-phoshate binding barrel"/>
    <property type="match status" value="1"/>
</dbReference>
<comment type="catalytic activity">
    <reaction evidence="1">
        <text>N-(5-phospho-beta-D-ribosyl)anthranilate = 1-(2-carboxyphenylamino)-1-deoxy-D-ribulose 5-phosphate</text>
        <dbReference type="Rhea" id="RHEA:21540"/>
        <dbReference type="ChEBI" id="CHEBI:18277"/>
        <dbReference type="ChEBI" id="CHEBI:58613"/>
        <dbReference type="EC" id="5.3.1.24"/>
    </reaction>
</comment>
<comment type="pathway">
    <text evidence="1">Amino-acid biosynthesis; L-tryptophan biosynthesis; L-tryptophan from chorismate: step 3/5.</text>
</comment>
<comment type="similarity">
    <text evidence="1">Belongs to the TrpF family.</text>
</comment>
<reference key="1">
    <citation type="journal article" date="2010" name="Appl. Environ. Microbiol.">
        <title>Conserved symbiotic plasmid DNA sequences in the multireplicon pangenomic structure of Rhizobium etli.</title>
        <authorList>
            <person name="Gonzalez V."/>
            <person name="Acosta J.L."/>
            <person name="Santamaria R.I."/>
            <person name="Bustos P."/>
            <person name="Fernandez J.L."/>
            <person name="Hernandez Gonzalez I.L."/>
            <person name="Diaz R."/>
            <person name="Flores M."/>
            <person name="Palacios R."/>
            <person name="Mora J."/>
            <person name="Davila G."/>
        </authorList>
    </citation>
    <scope>NUCLEOTIDE SEQUENCE [LARGE SCALE GENOMIC DNA]</scope>
    <source>
        <strain>CIAT 652</strain>
    </source>
</reference>